<proteinExistence type="inferred from homology"/>
<reference key="1">
    <citation type="journal article" date="2001" name="Genome Res.">
        <title>The complete genome sequence of the lactic acid bacterium Lactococcus lactis ssp. lactis IL1403.</title>
        <authorList>
            <person name="Bolotin A."/>
            <person name="Wincker P."/>
            <person name="Mauger S."/>
            <person name="Jaillon O."/>
            <person name="Malarme K."/>
            <person name="Weissenbach J."/>
            <person name="Ehrlich S.D."/>
            <person name="Sorokin A."/>
        </authorList>
    </citation>
    <scope>NUCLEOTIDE SEQUENCE [LARGE SCALE GENOMIC DNA]</scope>
    <source>
        <strain>IL1403</strain>
    </source>
</reference>
<name>EZRA_LACLA</name>
<accession>Q9CDR6</accession>
<comment type="function">
    <text evidence="1">Negative regulator of FtsZ ring formation; modulates the frequency and position of FtsZ ring formation. Inhibits FtsZ ring formation at polar sites. Interacts either with FtsZ or with one of its binding partners to promote depolymerization.</text>
</comment>
<comment type="subcellular location">
    <subcellularLocation>
        <location>Cell membrane</location>
        <topology>Single-pass membrane protein</topology>
    </subcellularLocation>
    <text evidence="1">Colocalized with FtsZ to the nascent septal site.</text>
</comment>
<comment type="similarity">
    <text evidence="1">Belongs to the EzrA family.</text>
</comment>
<protein>
    <recommendedName>
        <fullName evidence="1">Septation ring formation regulator EzrA</fullName>
    </recommendedName>
</protein>
<gene>
    <name evidence="1" type="primary">ezrA</name>
    <name type="ordered locus">LL2151</name>
    <name type="ORF">L7722</name>
</gene>
<sequence>MSSTVIILIVVLLVILVAFYAFAILMRKKTEDRILALEERKESLFDLPVQEEIDSVKKMHLVGQSQTIFREWNQKWLDLSSNSFADLEEHIFEAEQLNDSFHFFRARESVADSEAQIELMEGDVEGIRQGVAQLVEQEKRNSNKIQESLDLYDNLRSDIADNADLYGTVITELEKHLANIETEFSQFVTLNSTGDPIEAAEVLETAEEHTIALRAITEQIPSFIKTIEKDVPKRLEELQEASDKFVAEEYILPDNVNIKERMDDLHDHLVESSSLLEQFELDRVEAELGLIQEKVEELYAIFEREYSARRNVEKRSSVLKEYIEHIRANNKNLLLEIDHVTQAYILSGNEKGYVRGYQEHLESLDSDVDEILGNIQAKTMPYSILSRRVNSVVNALEDIEKNQIKISDTLTGLRDEERAAQEIAERFDSELRTIKRYVEKCNLPGLPKDYLDLFFTTGDRVQNLFKELGRVRINIDTINHLVDVSTEDMHVLKEATTNLTDHAVLAEQLIQYANRYKAANEQVAQGISRALQLFENSRDYDGSFDEISKTLELVEPGAASRISGVYFKNKPTPDYL</sequence>
<organism>
    <name type="scientific">Lactococcus lactis subsp. lactis (strain IL1403)</name>
    <name type="common">Streptococcus lactis</name>
    <dbReference type="NCBI Taxonomy" id="272623"/>
    <lineage>
        <taxon>Bacteria</taxon>
        <taxon>Bacillati</taxon>
        <taxon>Bacillota</taxon>
        <taxon>Bacilli</taxon>
        <taxon>Lactobacillales</taxon>
        <taxon>Streptococcaceae</taxon>
        <taxon>Lactococcus</taxon>
    </lineage>
</organism>
<dbReference type="EMBL" id="AE005176">
    <property type="protein sequence ID" value="AAK06249.1"/>
    <property type="molecule type" value="Genomic_DNA"/>
</dbReference>
<dbReference type="PIR" id="G86893">
    <property type="entry name" value="G86893"/>
</dbReference>
<dbReference type="RefSeq" id="NP_268308.1">
    <property type="nucleotide sequence ID" value="NC_002662.1"/>
</dbReference>
<dbReference type="RefSeq" id="WP_003132670.1">
    <property type="nucleotide sequence ID" value="NC_002662.1"/>
</dbReference>
<dbReference type="SMR" id="Q9CDR6"/>
<dbReference type="PaxDb" id="272623-L7722"/>
<dbReference type="EnsemblBacteria" id="AAK06249">
    <property type="protein sequence ID" value="AAK06249"/>
    <property type="gene ID" value="L7722"/>
</dbReference>
<dbReference type="GeneID" id="89634495"/>
<dbReference type="KEGG" id="lla:L7722"/>
<dbReference type="PATRIC" id="fig|272623.7.peg.2310"/>
<dbReference type="eggNOG" id="COG4477">
    <property type="taxonomic scope" value="Bacteria"/>
</dbReference>
<dbReference type="HOGENOM" id="CLU_034079_2_0_9"/>
<dbReference type="OrthoDB" id="1654473at2"/>
<dbReference type="Proteomes" id="UP000002196">
    <property type="component" value="Chromosome"/>
</dbReference>
<dbReference type="GO" id="GO:0005886">
    <property type="term" value="C:plasma membrane"/>
    <property type="evidence" value="ECO:0007669"/>
    <property type="project" value="UniProtKB-SubCell"/>
</dbReference>
<dbReference type="GO" id="GO:0005940">
    <property type="term" value="C:septin ring"/>
    <property type="evidence" value="ECO:0007669"/>
    <property type="project" value="InterPro"/>
</dbReference>
<dbReference type="GO" id="GO:0000917">
    <property type="term" value="P:division septum assembly"/>
    <property type="evidence" value="ECO:0007669"/>
    <property type="project" value="UniProtKB-KW"/>
</dbReference>
<dbReference type="GO" id="GO:0000921">
    <property type="term" value="P:septin ring assembly"/>
    <property type="evidence" value="ECO:0007669"/>
    <property type="project" value="InterPro"/>
</dbReference>
<dbReference type="HAMAP" id="MF_00728">
    <property type="entry name" value="EzrA"/>
    <property type="match status" value="1"/>
</dbReference>
<dbReference type="InterPro" id="IPR010379">
    <property type="entry name" value="EzrA"/>
</dbReference>
<dbReference type="NCBIfam" id="NF003410">
    <property type="entry name" value="PRK04778.1-4"/>
    <property type="match status" value="1"/>
</dbReference>
<dbReference type="Pfam" id="PF06160">
    <property type="entry name" value="EzrA"/>
    <property type="match status" value="1"/>
</dbReference>
<feature type="chain" id="PRO_0000172872" description="Septation ring formation regulator EzrA">
    <location>
        <begin position="1"/>
        <end position="576"/>
    </location>
</feature>
<feature type="topological domain" description="Extracellular" evidence="1">
    <location>
        <begin position="1"/>
        <end position="7"/>
    </location>
</feature>
<feature type="transmembrane region" description="Helical" evidence="1">
    <location>
        <begin position="8"/>
        <end position="26"/>
    </location>
</feature>
<feature type="topological domain" description="Cytoplasmic" evidence="1">
    <location>
        <begin position="27"/>
        <end position="576"/>
    </location>
</feature>
<feature type="coiled-coil region" evidence="1">
    <location>
        <begin position="105"/>
        <end position="134"/>
    </location>
</feature>
<feature type="coiled-coil region" evidence="1">
    <location>
        <begin position="277"/>
        <end position="301"/>
    </location>
</feature>
<keyword id="KW-0131">Cell cycle</keyword>
<keyword id="KW-0132">Cell division</keyword>
<keyword id="KW-1003">Cell membrane</keyword>
<keyword id="KW-0175">Coiled coil</keyword>
<keyword id="KW-0472">Membrane</keyword>
<keyword id="KW-1185">Reference proteome</keyword>
<keyword id="KW-0717">Septation</keyword>
<keyword id="KW-0812">Transmembrane</keyword>
<keyword id="KW-1133">Transmembrane helix</keyword>
<evidence type="ECO:0000255" key="1">
    <source>
        <dbReference type="HAMAP-Rule" id="MF_00728"/>
    </source>
</evidence>